<evidence type="ECO:0000250" key="1"/>
<evidence type="ECO:0000305" key="2"/>
<accession>Q75BE7</accession>
<gene>
    <name type="primary">ASA1</name>
    <name type="ordered locus">ADL383W</name>
    <name type="ORF">AGOS_ADL383W</name>
</gene>
<proteinExistence type="inferred from homology"/>
<dbReference type="EMBL" id="AE016817">
    <property type="protein sequence ID" value="AAS51537.1"/>
    <property type="molecule type" value="Genomic_DNA"/>
</dbReference>
<dbReference type="RefSeq" id="NP_983713.1">
    <property type="nucleotide sequence ID" value="NM_209066.1"/>
</dbReference>
<dbReference type="FunCoup" id="Q75BE7">
    <property type="interactions" value="60"/>
</dbReference>
<dbReference type="STRING" id="284811.Q75BE7"/>
<dbReference type="EnsemblFungi" id="AAS51537">
    <property type="protein sequence ID" value="AAS51537"/>
    <property type="gene ID" value="AGOS_ADL383W"/>
</dbReference>
<dbReference type="GeneID" id="4620009"/>
<dbReference type="KEGG" id="ago:AGOS_ADL383W"/>
<dbReference type="eggNOG" id="ENOG502QU4T">
    <property type="taxonomic scope" value="Eukaryota"/>
</dbReference>
<dbReference type="HOGENOM" id="CLU_045414_1_0_1"/>
<dbReference type="InParanoid" id="Q75BE7"/>
<dbReference type="OMA" id="LVCCNTQ"/>
<dbReference type="OrthoDB" id="7668193at2759"/>
<dbReference type="Proteomes" id="UP000000591">
    <property type="component" value="Chromosome IV"/>
</dbReference>
<dbReference type="GO" id="GO:0005634">
    <property type="term" value="C:nucleus"/>
    <property type="evidence" value="ECO:0007669"/>
    <property type="project" value="UniProtKB-SubCell"/>
</dbReference>
<dbReference type="GO" id="GO:0006325">
    <property type="term" value="P:chromatin organization"/>
    <property type="evidence" value="ECO:0007669"/>
    <property type="project" value="UniProtKB-KW"/>
</dbReference>
<dbReference type="Gene3D" id="2.130.10.10">
    <property type="entry name" value="YVTN repeat-like/Quinoprotein amine dehydrogenase"/>
    <property type="match status" value="1"/>
</dbReference>
<dbReference type="InterPro" id="IPR015943">
    <property type="entry name" value="WD40/YVTN_repeat-like_dom_sf"/>
</dbReference>
<dbReference type="InterPro" id="IPR036322">
    <property type="entry name" value="WD40_repeat_dom_sf"/>
</dbReference>
<dbReference type="PANTHER" id="PTHR19854:SF1">
    <property type="entry name" value="GUANINE NUCLEOTIDE-BINDING PROTEIN SUBUNIT BETA-LIKE PROTEIN 1"/>
    <property type="match status" value="1"/>
</dbReference>
<dbReference type="PANTHER" id="PTHR19854">
    <property type="entry name" value="TRANSDUCIN BETA-LIKE 3"/>
    <property type="match status" value="1"/>
</dbReference>
<dbReference type="SUPFAM" id="SSF50978">
    <property type="entry name" value="WD40 repeat-like"/>
    <property type="match status" value="1"/>
</dbReference>
<protein>
    <recommendedName>
        <fullName>ASTRA-associated protein 1</fullName>
    </recommendedName>
</protein>
<name>ASA1_EREGS</name>
<feature type="chain" id="PRO_0000402201" description="ASTRA-associated protein 1">
    <location>
        <begin position="1"/>
        <end position="395"/>
    </location>
</feature>
<feature type="repeat" description="WD 1">
    <location>
        <begin position="7"/>
        <end position="48"/>
    </location>
</feature>
<feature type="repeat" description="WD 2">
    <location>
        <begin position="221"/>
        <end position="260"/>
    </location>
</feature>
<feature type="repeat" description="WD 3">
    <location>
        <begin position="343"/>
        <end position="386"/>
    </location>
</feature>
<reference key="1">
    <citation type="journal article" date="2004" name="Science">
        <title>The Ashbya gossypii genome as a tool for mapping the ancient Saccharomyces cerevisiae genome.</title>
        <authorList>
            <person name="Dietrich F.S."/>
            <person name="Voegeli S."/>
            <person name="Brachat S."/>
            <person name="Lerch A."/>
            <person name="Gates K."/>
            <person name="Steiner S."/>
            <person name="Mohr C."/>
            <person name="Poehlmann R."/>
            <person name="Luedi P."/>
            <person name="Choi S."/>
            <person name="Wing R.A."/>
            <person name="Flavier A."/>
            <person name="Gaffney T.D."/>
            <person name="Philippsen P."/>
        </authorList>
    </citation>
    <scope>NUCLEOTIDE SEQUENCE [LARGE SCALE GENOMIC DNA]</scope>
    <source>
        <strain>ATCC 10895 / CBS 109.51 / FGSC 9923 / NRRL Y-1056</strain>
    </source>
</reference>
<reference key="2">
    <citation type="journal article" date="2013" name="G3 (Bethesda)">
        <title>Genomes of Ashbya fungi isolated from insects reveal four mating-type loci, numerous translocations, lack of transposons, and distinct gene duplications.</title>
        <authorList>
            <person name="Dietrich F.S."/>
            <person name="Voegeli S."/>
            <person name="Kuo S."/>
            <person name="Philippsen P."/>
        </authorList>
    </citation>
    <scope>GENOME REANNOTATION</scope>
    <source>
        <strain>ATCC 10895 / CBS 109.51 / FGSC 9923 / NRRL Y-1056</strain>
    </source>
</reference>
<sequence>MRFTLRAHVSTVTDLKPVSHRQTPHLLSADSKGCLYLWNLISRRPIASIDLKTHIIAIEVVGQGLYAALARDNKLRFISLQEESRLTRINDKVSRELQSLEIVYEIPVNCLNFANFALQDLGLRNYRLWCCNTMDAESIDVYEFQLGDRQSFKRTFNAINLFDSVAGLAEAKQKFRFDKMGIVMRFIVAGDTVFCGYESGVVVGLRIRDKSLQICYASFAHYPEPVLSLAHDRTERRVFSSSTTDQVCVHNIPTPDLPVVTSVSGIQVVANAGTREEVINAPLKKIGHLAVLNDILLLTSWHGYVLGLQDQKELFRYRKERNLLCVDDSTDGQAETKKEKPWINPGPIAGIAHSTDSQLVLEKLPIGGHRRLKNFLEHKWYITGYNDGTITVSQI</sequence>
<organism>
    <name type="scientific">Eremothecium gossypii (strain ATCC 10895 / CBS 109.51 / FGSC 9923 / NRRL Y-1056)</name>
    <name type="common">Yeast</name>
    <name type="synonym">Ashbya gossypii</name>
    <dbReference type="NCBI Taxonomy" id="284811"/>
    <lineage>
        <taxon>Eukaryota</taxon>
        <taxon>Fungi</taxon>
        <taxon>Dikarya</taxon>
        <taxon>Ascomycota</taxon>
        <taxon>Saccharomycotina</taxon>
        <taxon>Saccharomycetes</taxon>
        <taxon>Saccharomycetales</taxon>
        <taxon>Saccharomycetaceae</taxon>
        <taxon>Eremothecium</taxon>
    </lineage>
</organism>
<keyword id="KW-0156">Chromatin regulator</keyword>
<keyword id="KW-0539">Nucleus</keyword>
<keyword id="KW-1185">Reference proteome</keyword>
<keyword id="KW-0677">Repeat</keyword>
<keyword id="KW-0853">WD repeat</keyword>
<comment type="function">
    <text evidence="1">Component of the ASTRA complex involved in chromatin remodeling.</text>
</comment>
<comment type="subunit">
    <text evidence="1">Component of the ASTRA chromatin remodeling machinery complex.</text>
</comment>
<comment type="subcellular location">
    <subcellularLocation>
        <location evidence="1">Nucleus</location>
    </subcellularLocation>
</comment>
<comment type="similarity">
    <text evidence="2">Belongs to the WD repeat ASA1 family.</text>
</comment>